<gene>
    <name evidence="1" type="primary">recR</name>
    <name type="ordered locus">CCNA_00270</name>
</gene>
<reference key="1">
    <citation type="journal article" date="2010" name="J. Bacteriol.">
        <title>The genetic basis of laboratory adaptation in Caulobacter crescentus.</title>
        <authorList>
            <person name="Marks M.E."/>
            <person name="Castro-Rojas C.M."/>
            <person name="Teiling C."/>
            <person name="Du L."/>
            <person name="Kapatral V."/>
            <person name="Walunas T.L."/>
            <person name="Crosson S."/>
        </authorList>
    </citation>
    <scope>NUCLEOTIDE SEQUENCE [LARGE SCALE GENOMIC DNA]</scope>
    <source>
        <strain>NA1000 / CB15N</strain>
    </source>
</reference>
<protein>
    <recommendedName>
        <fullName evidence="1">Recombination protein RecR</fullName>
    </recommendedName>
</protein>
<dbReference type="EMBL" id="CP001340">
    <property type="protein sequence ID" value="ACL93737.1"/>
    <property type="molecule type" value="Genomic_DNA"/>
</dbReference>
<dbReference type="RefSeq" id="WP_012639926.1">
    <property type="nucleotide sequence ID" value="NC_011916.1"/>
</dbReference>
<dbReference type="RefSeq" id="YP_002515645.1">
    <property type="nucleotide sequence ID" value="NC_011916.1"/>
</dbReference>
<dbReference type="SMR" id="B8GYE0"/>
<dbReference type="GeneID" id="7330723"/>
<dbReference type="KEGG" id="ccs:CCNA_00270"/>
<dbReference type="PATRIC" id="fig|565050.3.peg.267"/>
<dbReference type="HOGENOM" id="CLU_060739_1_1_5"/>
<dbReference type="OrthoDB" id="9802672at2"/>
<dbReference type="PhylomeDB" id="B8GYE0"/>
<dbReference type="Proteomes" id="UP000001364">
    <property type="component" value="Chromosome"/>
</dbReference>
<dbReference type="GO" id="GO:0003677">
    <property type="term" value="F:DNA binding"/>
    <property type="evidence" value="ECO:0007669"/>
    <property type="project" value="UniProtKB-UniRule"/>
</dbReference>
<dbReference type="GO" id="GO:0008270">
    <property type="term" value="F:zinc ion binding"/>
    <property type="evidence" value="ECO:0007669"/>
    <property type="project" value="UniProtKB-KW"/>
</dbReference>
<dbReference type="GO" id="GO:0006310">
    <property type="term" value="P:DNA recombination"/>
    <property type="evidence" value="ECO:0007669"/>
    <property type="project" value="UniProtKB-UniRule"/>
</dbReference>
<dbReference type="GO" id="GO:0006281">
    <property type="term" value="P:DNA repair"/>
    <property type="evidence" value="ECO:0007669"/>
    <property type="project" value="UniProtKB-UniRule"/>
</dbReference>
<dbReference type="CDD" id="cd01025">
    <property type="entry name" value="TOPRIM_recR"/>
    <property type="match status" value="1"/>
</dbReference>
<dbReference type="Gene3D" id="3.40.1360.10">
    <property type="match status" value="1"/>
</dbReference>
<dbReference type="Gene3D" id="6.10.250.240">
    <property type="match status" value="1"/>
</dbReference>
<dbReference type="Gene3D" id="1.10.8.420">
    <property type="entry name" value="RecR Domain 1"/>
    <property type="match status" value="1"/>
</dbReference>
<dbReference type="HAMAP" id="MF_00017">
    <property type="entry name" value="RecR"/>
    <property type="match status" value="1"/>
</dbReference>
<dbReference type="InterPro" id="IPR000093">
    <property type="entry name" value="DNA_Rcmb_RecR"/>
</dbReference>
<dbReference type="InterPro" id="IPR023627">
    <property type="entry name" value="Rcmb_RecR"/>
</dbReference>
<dbReference type="InterPro" id="IPR015967">
    <property type="entry name" value="Rcmb_RecR_Znf"/>
</dbReference>
<dbReference type="InterPro" id="IPR006171">
    <property type="entry name" value="TOPRIM_dom"/>
</dbReference>
<dbReference type="InterPro" id="IPR034137">
    <property type="entry name" value="TOPRIM_RecR"/>
</dbReference>
<dbReference type="NCBIfam" id="TIGR00615">
    <property type="entry name" value="recR"/>
    <property type="match status" value="1"/>
</dbReference>
<dbReference type="PANTHER" id="PTHR30446">
    <property type="entry name" value="RECOMBINATION PROTEIN RECR"/>
    <property type="match status" value="1"/>
</dbReference>
<dbReference type="PANTHER" id="PTHR30446:SF0">
    <property type="entry name" value="RECOMBINATION PROTEIN RECR"/>
    <property type="match status" value="1"/>
</dbReference>
<dbReference type="Pfam" id="PF21175">
    <property type="entry name" value="RecR_C"/>
    <property type="match status" value="1"/>
</dbReference>
<dbReference type="Pfam" id="PF21176">
    <property type="entry name" value="RecR_HhH"/>
    <property type="match status" value="1"/>
</dbReference>
<dbReference type="Pfam" id="PF02132">
    <property type="entry name" value="RecR_ZnF"/>
    <property type="match status" value="1"/>
</dbReference>
<dbReference type="Pfam" id="PF13662">
    <property type="entry name" value="Toprim_4"/>
    <property type="match status" value="1"/>
</dbReference>
<dbReference type="SMART" id="SM00493">
    <property type="entry name" value="TOPRIM"/>
    <property type="match status" value="1"/>
</dbReference>
<dbReference type="SUPFAM" id="SSF111304">
    <property type="entry name" value="Recombination protein RecR"/>
    <property type="match status" value="1"/>
</dbReference>
<dbReference type="PROSITE" id="PS01300">
    <property type="entry name" value="RECR"/>
    <property type="match status" value="1"/>
</dbReference>
<dbReference type="PROSITE" id="PS50880">
    <property type="entry name" value="TOPRIM"/>
    <property type="match status" value="1"/>
</dbReference>
<name>RECR_CAUVN</name>
<evidence type="ECO:0000255" key="1">
    <source>
        <dbReference type="HAMAP-Rule" id="MF_00017"/>
    </source>
</evidence>
<sequence length="200" mass="20661">MAASAGPEIERLIALLSKLPGLGPRSGRRAALALLKKRDTLLAPLATAMAEAQAKVRTCGTCGSLDVTDPCAVCADGSRDGRLLCVVEEVGSVWAMERGGSFKGRYHVLGGLLSALDGIGPEALRIGELVGRVADGSVAEVILALPATVDGQTTAHYIADRLAKTNVPVTMLARGVPVGGDLDWLDDGTIAQALRARRPA</sequence>
<organism>
    <name type="scientific">Caulobacter vibrioides (strain NA1000 / CB15N)</name>
    <name type="common">Caulobacter crescentus</name>
    <dbReference type="NCBI Taxonomy" id="565050"/>
    <lineage>
        <taxon>Bacteria</taxon>
        <taxon>Pseudomonadati</taxon>
        <taxon>Pseudomonadota</taxon>
        <taxon>Alphaproteobacteria</taxon>
        <taxon>Caulobacterales</taxon>
        <taxon>Caulobacteraceae</taxon>
        <taxon>Caulobacter</taxon>
    </lineage>
</organism>
<proteinExistence type="inferred from homology"/>
<keyword id="KW-0227">DNA damage</keyword>
<keyword id="KW-0233">DNA recombination</keyword>
<keyword id="KW-0234">DNA repair</keyword>
<keyword id="KW-0479">Metal-binding</keyword>
<keyword id="KW-1185">Reference proteome</keyword>
<keyword id="KW-0862">Zinc</keyword>
<keyword id="KW-0863">Zinc-finger</keyword>
<feature type="chain" id="PRO_1000195370" description="Recombination protein RecR">
    <location>
        <begin position="1"/>
        <end position="200"/>
    </location>
</feature>
<feature type="domain" description="Toprim" evidence="1">
    <location>
        <begin position="82"/>
        <end position="177"/>
    </location>
</feature>
<feature type="zinc finger region" description="C4-type" evidence="1">
    <location>
        <begin position="59"/>
        <end position="74"/>
    </location>
</feature>
<comment type="function">
    <text evidence="1">May play a role in DNA repair. It seems to be involved in an RecBC-independent recombinational process of DNA repair. It may act with RecF and RecO.</text>
</comment>
<comment type="similarity">
    <text evidence="1">Belongs to the RecR family.</text>
</comment>
<accession>B8GYE0</accession>